<organism>
    <name type="scientific">Mus musculus</name>
    <name type="common">Mouse</name>
    <dbReference type="NCBI Taxonomy" id="10090"/>
    <lineage>
        <taxon>Eukaryota</taxon>
        <taxon>Metazoa</taxon>
        <taxon>Chordata</taxon>
        <taxon>Craniata</taxon>
        <taxon>Vertebrata</taxon>
        <taxon>Euteleostomi</taxon>
        <taxon>Mammalia</taxon>
        <taxon>Eutheria</taxon>
        <taxon>Euarchontoglires</taxon>
        <taxon>Glires</taxon>
        <taxon>Rodentia</taxon>
        <taxon>Myomorpha</taxon>
        <taxon>Muroidea</taxon>
        <taxon>Muridae</taxon>
        <taxon>Murinae</taxon>
        <taxon>Mus</taxon>
        <taxon>Mus</taxon>
    </lineage>
</organism>
<feature type="signal peptide" evidence="2">
    <location>
        <begin position="1"/>
        <end position="21"/>
    </location>
</feature>
<feature type="chain" id="PRO_0000333692" description="Calcium-activated chloride channel regulator 1">
    <location>
        <begin position="22"/>
        <end position="913"/>
    </location>
</feature>
<feature type="domain" description="VWFA" evidence="3">
    <location>
        <begin position="307"/>
        <end position="476"/>
    </location>
</feature>
<feature type="region of interest" description="Metalloprotease domain" evidence="1">
    <location>
        <begin position="46"/>
        <end position="199"/>
    </location>
</feature>
<feature type="active site" evidence="1">
    <location>
        <position position="157"/>
    </location>
</feature>
<feature type="binding site" evidence="1">
    <location>
        <position position="156"/>
    </location>
    <ligand>
        <name>Zn(2+)</name>
        <dbReference type="ChEBI" id="CHEBI:29105"/>
        <note>catalytic</note>
    </ligand>
</feature>
<feature type="binding site" evidence="1">
    <location>
        <position position="160"/>
    </location>
    <ligand>
        <name>Zn(2+)</name>
        <dbReference type="ChEBI" id="CHEBI:29105"/>
        <note>catalytic</note>
    </ligand>
</feature>
<feature type="binding site" evidence="1">
    <location>
        <position position="167"/>
    </location>
    <ligand>
        <name>Zn(2+)</name>
        <dbReference type="ChEBI" id="CHEBI:29105"/>
        <note>catalytic</note>
    </ligand>
</feature>
<feature type="site" description="Cleavage; by autolysis" evidence="1">
    <location>
        <begin position="695"/>
        <end position="696"/>
    </location>
</feature>
<feature type="glycosylation site" description="N-linked (GlcNAc...) asparagine" evidence="2">
    <location>
        <position position="504"/>
    </location>
</feature>
<feature type="glycosylation site" description="N-linked (GlcNAc...) asparagine" evidence="2">
    <location>
        <position position="770"/>
    </location>
</feature>
<feature type="glycosylation site" description="N-linked (GlcNAc...) asparagine" evidence="2">
    <location>
        <position position="804"/>
    </location>
</feature>
<feature type="glycosylation site" description="N-linked (GlcNAc...) asparagine" evidence="2">
    <location>
        <position position="810"/>
    </location>
</feature>
<feature type="glycosylation site" description="N-linked (GlcNAc...) asparagine" evidence="2">
    <location>
        <position position="836"/>
    </location>
</feature>
<feature type="glycosylation site" description="N-linked (GlcNAc...) asparagine" evidence="2">
    <location>
        <position position="887"/>
    </location>
</feature>
<feature type="sequence conflict" description="In Ref. 4; AAH28343." evidence="13" ref="4">
    <original>L</original>
    <variation>F</variation>
    <location>
        <position position="469"/>
    </location>
</feature>
<evidence type="ECO:0000250" key="1">
    <source>
        <dbReference type="UniProtKB" id="A8K7I4"/>
    </source>
</evidence>
<evidence type="ECO:0000255" key="2"/>
<evidence type="ECO:0000255" key="3">
    <source>
        <dbReference type="PROSITE-ProRule" id="PRU00219"/>
    </source>
</evidence>
<evidence type="ECO:0000269" key="4">
    <source>
    </source>
</evidence>
<evidence type="ECO:0000269" key="5">
    <source>
    </source>
</evidence>
<evidence type="ECO:0000269" key="6">
    <source>
    </source>
</evidence>
<evidence type="ECO:0000269" key="7">
    <source>
    </source>
</evidence>
<evidence type="ECO:0000269" key="8">
    <source>
    </source>
</evidence>
<evidence type="ECO:0000269" key="9">
    <source>
    </source>
</evidence>
<evidence type="ECO:0000269" key="10">
    <source>
    </source>
</evidence>
<evidence type="ECO:0000269" key="11">
    <source>
    </source>
</evidence>
<evidence type="ECO:0000269" key="12">
    <source>
    </source>
</evidence>
<evidence type="ECO:0000305" key="13"/>
<proteinExistence type="evidence at protein level"/>
<gene>
    <name type="primary">Clca1</name>
    <name type="synonym">Clca3</name>
    <name type="synonym">Gob5</name>
</gene>
<accession>Q9D7Z6</accession>
<accession>O88826</accession>
<accession>Q8R049</accession>
<dbReference type="EC" id="3.4.-.-" evidence="1"/>
<dbReference type="EMBL" id="AB017156">
    <property type="protein sequence ID" value="BAA33743.1"/>
    <property type="molecule type" value="mRNA"/>
</dbReference>
<dbReference type="EMBL" id="AK008659">
    <property type="protein sequence ID" value="BAB25815.2"/>
    <property type="molecule type" value="mRNA"/>
</dbReference>
<dbReference type="EMBL" id="AK136476">
    <property type="protein sequence ID" value="BAE22995.1"/>
    <property type="molecule type" value="mRNA"/>
</dbReference>
<dbReference type="EMBL" id="BC028343">
    <property type="protein sequence ID" value="AAH28343.1"/>
    <property type="molecule type" value="mRNA"/>
</dbReference>
<dbReference type="EMBL" id="BC116318">
    <property type="protein sequence ID" value="AAI16319.1"/>
    <property type="molecule type" value="mRNA"/>
</dbReference>
<dbReference type="EMBL" id="BC116319">
    <property type="protein sequence ID" value="AAI16320.1"/>
    <property type="molecule type" value="mRNA"/>
</dbReference>
<dbReference type="CCDS" id="CCDS17889.1"/>
<dbReference type="PIR" id="JG0168">
    <property type="entry name" value="JG0168"/>
</dbReference>
<dbReference type="RefSeq" id="NP_059502.1">
    <property type="nucleotide sequence ID" value="NM_017474.2"/>
</dbReference>
<dbReference type="SMR" id="Q9D7Z6"/>
<dbReference type="BioGRID" id="204754">
    <property type="interactions" value="5"/>
</dbReference>
<dbReference type="FunCoup" id="Q9D7Z6">
    <property type="interactions" value="30"/>
</dbReference>
<dbReference type="IntAct" id="Q9D7Z6">
    <property type="interactions" value="1"/>
</dbReference>
<dbReference type="MINT" id="Q9D7Z6"/>
<dbReference type="STRING" id="10090.ENSMUSP00000029919"/>
<dbReference type="MEROPS" id="M87.001"/>
<dbReference type="GlyCosmos" id="Q9D7Z6">
    <property type="glycosylation" value="6 sites, No reported glycans"/>
</dbReference>
<dbReference type="GlyGen" id="Q9D7Z6">
    <property type="glycosylation" value="6 sites"/>
</dbReference>
<dbReference type="iPTMnet" id="Q9D7Z6"/>
<dbReference type="PhosphoSitePlus" id="Q9D7Z6"/>
<dbReference type="PaxDb" id="10090-ENSMUSP00000029919"/>
<dbReference type="PeptideAtlas" id="Q9D7Z6"/>
<dbReference type="ProteomicsDB" id="283571"/>
<dbReference type="Antibodypedia" id="33585">
    <property type="antibodies" value="213 antibodies from 31 providers"/>
</dbReference>
<dbReference type="DNASU" id="23844"/>
<dbReference type="Ensembl" id="ENSMUST00000029919.7">
    <property type="protein sequence ID" value="ENSMUSP00000029919.6"/>
    <property type="gene ID" value="ENSMUSG00000028255.7"/>
</dbReference>
<dbReference type="GeneID" id="23844"/>
<dbReference type="KEGG" id="mmu:23844"/>
<dbReference type="UCSC" id="uc008rqf.2">
    <property type="organism name" value="mouse"/>
</dbReference>
<dbReference type="AGR" id="MGI:1346342"/>
<dbReference type="CTD" id="1179"/>
<dbReference type="MGI" id="MGI:1346342">
    <property type="gene designation" value="Clca1"/>
</dbReference>
<dbReference type="VEuPathDB" id="HostDB:ENSMUSG00000028255"/>
<dbReference type="eggNOG" id="ENOG502QRRD">
    <property type="taxonomic scope" value="Eukaryota"/>
</dbReference>
<dbReference type="GeneTree" id="ENSGT00940000154682"/>
<dbReference type="HOGENOM" id="CLU_005812_0_1_1"/>
<dbReference type="InParanoid" id="Q9D7Z6"/>
<dbReference type="OMA" id="MQNQKCN"/>
<dbReference type="OrthoDB" id="687730at2759"/>
<dbReference type="PhylomeDB" id="Q9D7Z6"/>
<dbReference type="TreeFam" id="TF328396"/>
<dbReference type="Reactome" id="R-MMU-2672351">
    <property type="pathway name" value="Stimuli-sensing channels"/>
</dbReference>
<dbReference type="BioGRID-ORCS" id="23844">
    <property type="hits" value="5 hits in 76 CRISPR screens"/>
</dbReference>
<dbReference type="ChiTaRS" id="Clca1">
    <property type="organism name" value="mouse"/>
</dbReference>
<dbReference type="PRO" id="PR:Q9D7Z6"/>
<dbReference type="Proteomes" id="UP000000589">
    <property type="component" value="Chromosome 3"/>
</dbReference>
<dbReference type="RNAct" id="Q9D7Z6">
    <property type="molecule type" value="protein"/>
</dbReference>
<dbReference type="Bgee" id="ENSMUSG00000028255">
    <property type="expression patterns" value="Expressed in left colon and 70 other cell types or tissues"/>
</dbReference>
<dbReference type="GO" id="GO:0005576">
    <property type="term" value="C:extracellular region"/>
    <property type="evidence" value="ECO:0007669"/>
    <property type="project" value="UniProtKB-SubCell"/>
</dbReference>
<dbReference type="GO" id="GO:0016020">
    <property type="term" value="C:membrane"/>
    <property type="evidence" value="ECO:0000314"/>
    <property type="project" value="MGI"/>
</dbReference>
<dbReference type="GO" id="GO:0005902">
    <property type="term" value="C:microvillus"/>
    <property type="evidence" value="ECO:0000314"/>
    <property type="project" value="MGI"/>
</dbReference>
<dbReference type="GO" id="GO:0030141">
    <property type="term" value="C:secretory granule"/>
    <property type="evidence" value="ECO:0000314"/>
    <property type="project" value="MGI"/>
</dbReference>
<dbReference type="GO" id="GO:0042589">
    <property type="term" value="C:zymogen granule membrane"/>
    <property type="evidence" value="ECO:0007669"/>
    <property type="project" value="Ensembl"/>
</dbReference>
<dbReference type="GO" id="GO:0005254">
    <property type="term" value="F:chloride channel activity"/>
    <property type="evidence" value="ECO:0000247"/>
    <property type="project" value="MGI"/>
</dbReference>
<dbReference type="GO" id="GO:0005229">
    <property type="term" value="F:intracellularly calcium-gated chloride channel activity"/>
    <property type="evidence" value="ECO:0007669"/>
    <property type="project" value="InterPro"/>
</dbReference>
<dbReference type="GO" id="GO:0046872">
    <property type="term" value="F:metal ion binding"/>
    <property type="evidence" value="ECO:0007669"/>
    <property type="project" value="UniProtKB-KW"/>
</dbReference>
<dbReference type="GO" id="GO:0008237">
    <property type="term" value="F:metallopeptidase activity"/>
    <property type="evidence" value="ECO:0007669"/>
    <property type="project" value="UniProtKB-KW"/>
</dbReference>
<dbReference type="GO" id="GO:0006816">
    <property type="term" value="P:calcium ion transport"/>
    <property type="evidence" value="ECO:0007669"/>
    <property type="project" value="UniProtKB-KW"/>
</dbReference>
<dbReference type="GO" id="GO:0071456">
    <property type="term" value="P:cellular response to hypoxia"/>
    <property type="evidence" value="ECO:0007669"/>
    <property type="project" value="Ensembl"/>
</dbReference>
<dbReference type="GO" id="GO:0006821">
    <property type="term" value="P:chloride transport"/>
    <property type="evidence" value="ECO:0000247"/>
    <property type="project" value="MGI"/>
</dbReference>
<dbReference type="GO" id="GO:0006508">
    <property type="term" value="P:proteolysis"/>
    <property type="evidence" value="ECO:0007669"/>
    <property type="project" value="UniProtKB-KW"/>
</dbReference>
<dbReference type="CDD" id="cd00198">
    <property type="entry name" value="vWFA"/>
    <property type="match status" value="1"/>
</dbReference>
<dbReference type="FunFam" id="2.60.40.10:FF:001134">
    <property type="entry name" value="Calcium-activated chloride channel regulator 1"/>
    <property type="match status" value="1"/>
</dbReference>
<dbReference type="FunFam" id="3.40.50.410:FF:000034">
    <property type="entry name" value="calcium-activated chloride channel regulator 1"/>
    <property type="match status" value="1"/>
</dbReference>
<dbReference type="Gene3D" id="2.60.40.10">
    <property type="entry name" value="Immunoglobulins"/>
    <property type="match status" value="1"/>
</dbReference>
<dbReference type="Gene3D" id="3.40.50.410">
    <property type="entry name" value="von Willebrand factor, type A domain"/>
    <property type="match status" value="1"/>
</dbReference>
<dbReference type="InterPro" id="IPR004727">
    <property type="entry name" value="CLCA_chordata"/>
</dbReference>
<dbReference type="InterPro" id="IPR013642">
    <property type="entry name" value="CLCA_N"/>
</dbReference>
<dbReference type="InterPro" id="IPR051266">
    <property type="entry name" value="CLCR"/>
</dbReference>
<dbReference type="InterPro" id="IPR013783">
    <property type="entry name" value="Ig-like_fold"/>
</dbReference>
<dbReference type="InterPro" id="IPR002035">
    <property type="entry name" value="VWF_A"/>
</dbReference>
<dbReference type="InterPro" id="IPR036465">
    <property type="entry name" value="vWFA_dom_sf"/>
</dbReference>
<dbReference type="NCBIfam" id="NF041940">
    <property type="entry name" value="choice_anch_X"/>
    <property type="match status" value="1"/>
</dbReference>
<dbReference type="NCBIfam" id="TIGR00868">
    <property type="entry name" value="hCaCC"/>
    <property type="match status" value="1"/>
</dbReference>
<dbReference type="PANTHER" id="PTHR10579">
    <property type="entry name" value="CALCIUM-ACTIVATED CHLORIDE CHANNEL REGULATOR"/>
    <property type="match status" value="1"/>
</dbReference>
<dbReference type="PANTHER" id="PTHR10579:SF52">
    <property type="entry name" value="CALCIUM-ACTIVATED CHLORIDE CHANNEL REGULATOR 1"/>
    <property type="match status" value="1"/>
</dbReference>
<dbReference type="Pfam" id="PF08434">
    <property type="entry name" value="CLCA"/>
    <property type="match status" value="1"/>
</dbReference>
<dbReference type="Pfam" id="PF13519">
    <property type="entry name" value="VWA_2"/>
    <property type="match status" value="1"/>
</dbReference>
<dbReference type="SMART" id="SM00327">
    <property type="entry name" value="VWA"/>
    <property type="match status" value="1"/>
</dbReference>
<dbReference type="SUPFAM" id="SSF53300">
    <property type="entry name" value="vWA-like"/>
    <property type="match status" value="1"/>
</dbReference>
<dbReference type="PROSITE" id="PS50234">
    <property type="entry name" value="VWFA"/>
    <property type="match status" value="1"/>
</dbReference>
<comment type="function">
    <text evidence="5 6 11">May be involved in mediating calcium-activated chloride conductance. May play critical roles in goblet cell metaplasia, mucus hypersecretion, cystic fibrosis and AHR. May be involved in the regulation of mucus production and/or secretion by goblet cells. Involved in the regulation of tissue inflammation in the innate immune response. May play a role as a tumor suppressor. Induces MUC5AC.</text>
</comment>
<comment type="subcellular location">
    <subcellularLocation>
        <location evidence="7 8 12">Secreted</location>
        <location evidence="7 8 12">Extracellular space</location>
    </subcellularLocation>
    <text>The 75 kDa N-terminal and a 35 kDa C-terminal products are fully secreted into extracellular environment as a soluble complex of two glycoproteins.</text>
</comment>
<comment type="tissue specificity">
    <text evidence="4 5 7">Exclusively expressed in the digestive and respiratory tracts and in the uterus (at protein level). Expressed in small intestine, colon, stomach, and uterus and slightly expressed in trachea tissue. Exclusively expressed in the mucin granule membranes of gastrointestinal, respiratory, and uterine goblet cells and other mucin-producing cells. In the colon, expressed in the surface mucous cells. In the stomach highly expressed in the surface epithelium in the pylorus. Strongly expressed in the airway epithelium of lung tissues associated with airway hyperresponsiveness (AHR).</text>
</comment>
<comment type="induction">
    <text evidence="6 9 10">By IL3, IL4 and IL9 in the lung. Increases in the bronchiolar epithelium of asbestos-induced fibrogenesis. Decreases in cystic fibrosis knockout mice.</text>
</comment>
<comment type="domain">
    <text evidence="1">The metalloprotease region is responsible for autoproteolytic processing. It can also cross-cleave other CLCA substrates.</text>
</comment>
<comment type="PTM">
    <text evidence="1 7">The 110 kDa translation product is autoproteolytically cleaved by the metalloprotease domain in the endoplasmic reticulum into a 75 kDa N-terminal and a 35 kDa C-terminal products that remain physically associated with each other. The cleavage is necessary for calcium-activated chloride channel (CaCC) activation activity.</text>
</comment>
<comment type="PTM">
    <text evidence="7 12">Glycosylated.</text>
</comment>
<comment type="disruption phenotype">
    <text evidence="11">Mice exhibit significantly increased bronchoalveolar lavage (BAL) inflammation consisted predominantly of neutrophils; have decreased goblet cell hyperplasia as well as decreased mucus production; have decreased airway hypersensitivity after cholinergic provocation with methacholine.</text>
</comment>
<comment type="similarity">
    <text evidence="13">Belongs to the CLCR family.</text>
</comment>
<protein>
    <recommendedName>
        <fullName>Calcium-activated chloride channel regulator 1</fullName>
        <ecNumber evidence="1">3.4.-.-</ecNumber>
    </recommendedName>
    <alternativeName>
        <fullName>Calcium-activated chloride channel family member 3</fullName>
        <shortName>mCLCA3</shortName>
    </alternativeName>
    <alternativeName>
        <fullName>Protein gob-5</fullName>
    </alternativeName>
</protein>
<keyword id="KW-0068">Autocatalytic cleavage</keyword>
<keyword id="KW-0106">Calcium</keyword>
<keyword id="KW-0109">Calcium transport</keyword>
<keyword id="KW-0868">Chloride</keyword>
<keyword id="KW-0325">Glycoprotein</keyword>
<keyword id="KW-0378">Hydrolase</keyword>
<keyword id="KW-0406">Ion transport</keyword>
<keyword id="KW-0479">Metal-binding</keyword>
<keyword id="KW-0482">Metalloprotease</keyword>
<keyword id="KW-0645">Protease</keyword>
<keyword id="KW-1185">Reference proteome</keyword>
<keyword id="KW-0964">Secreted</keyword>
<keyword id="KW-0732">Signal</keyword>
<keyword id="KW-0813">Transport</keyword>
<keyword id="KW-0862">Zinc</keyword>
<sequence length="913" mass="100071">MESLKSPVFLLILHLLEGVLSESLIQLNNNGYEGIVIAIDHDVPEDEALIQHIKDMVTQASPYLFEATGKRFYFKNVAILIPESWKAKPEYTRPKLETFKNADVLVSTTSPLGNDEPYTEHIGACGEKGIRIHLTPDFLAGKKLTQYGPQDRTFVHEWAHFRWGVFNEYNNDEKFYLSKGKPQAVRCSAAITGKNQVRRCQGGSCITNGKCVIDRVTGLYKDNCVFVPDPHQNEKASIMFNQNINSVVEFCTEKNHNQEAPNDQNQRCNLRSTWEVIQESEDFKQTTPMTAQPPAPTFSLLQIGQRIVCLVLDKSGSMLNDDRLNRMNQASRLFLLQTVEQGSWVGMVTFDSAAYVQSELKQLNSGADRDLLIKHLPTVSAGGTSICSGLRTAFTVIKKKYPTDGSEIVLLTDGEDNTISSCFDLVKQSGAIIHTVALGPAAAKELEQLSKMTGGLQTYSSDQVQNNGLVDAFAALSSGNAAIAQHSIQLESRGVNLQNNQWMNGSVIVDSSVGKDTLFLITWTTHPPTIFIWDPSGVEQNGFILDTTTKVAYLQVPGTAKVGFWKYSIQASSQTLTLTVTSRAASATLPPITVTPVVNKNTGKFPSPVTVYASIRQGASPILRASVTALIESVNGKTVTLELLDNGAGADATKNDGVYSRFFTAFDANGRYSVKIWALGGVTSDRQRAAPPKNRAMYIDGWIEDGEVRMNPPRPETSYVQDKQLCFSRTSSGGSFVATNVPAAAPIPDLFPPCQITDLKASIQGQNLVNLTWTAPGDDYDHGRASNYIIRMSTSIVDLRDHFNTSLQVNTTGLIPKEASSEEIFEFELGGNTFGNGTDIFIAIQAVDKSNLKSEISNIARVSVFIPAQEPPIPEDSTPPCPDISINSTIPGIHVLKIMWKWLGEMQVTLGLH</sequence>
<name>CLCA1_MOUSE</name>
<reference key="1">
    <citation type="journal article" date="1999" name="Biochem. Biophys. Res. Commun.">
        <title>Cloning and identification of the gene gob-5, which is expressed in intestinal goblet cells in mice.</title>
        <authorList>
            <person name="Komiya T."/>
            <person name="Tanigawa Y."/>
            <person name="Hirohashi S."/>
        </authorList>
    </citation>
    <scope>NUCLEOTIDE SEQUENCE [MRNA]</scope>
    <scope>TISSUE SPECIFICITY</scope>
    <source>
        <tissue>Intestine</tissue>
    </source>
</reference>
<reference key="2">
    <citation type="journal article" date="2001" name="Am. J. Respir. Cell Mol. Biol.">
        <title>Characterization of a calcium-activated chloride channel as a shared target of Th2 cytokine pathways and its potential involvement in asthma.</title>
        <authorList>
            <person name="Zhou Y."/>
            <person name="Dong Q."/>
            <person name="Louahed J."/>
            <person name="Dragwa C."/>
            <person name="Savio D."/>
            <person name="Huang M."/>
            <person name="Weiss C."/>
            <person name="Tomer Y."/>
            <person name="McLane M.P."/>
            <person name="Nicolaides N.C."/>
            <person name="Levitt R.C."/>
        </authorList>
    </citation>
    <scope>NUCLEOTIDE SEQUENCE [MRNA]</scope>
    <scope>FUNCTION</scope>
    <scope>INDUCTION</scope>
</reference>
<reference key="3">
    <citation type="journal article" date="2005" name="Science">
        <title>The transcriptional landscape of the mammalian genome.</title>
        <authorList>
            <person name="Carninci P."/>
            <person name="Kasukawa T."/>
            <person name="Katayama S."/>
            <person name="Gough J."/>
            <person name="Frith M.C."/>
            <person name="Maeda N."/>
            <person name="Oyama R."/>
            <person name="Ravasi T."/>
            <person name="Lenhard B."/>
            <person name="Wells C."/>
            <person name="Kodzius R."/>
            <person name="Shimokawa K."/>
            <person name="Bajic V.B."/>
            <person name="Brenner S.E."/>
            <person name="Batalov S."/>
            <person name="Forrest A.R."/>
            <person name="Zavolan M."/>
            <person name="Davis M.J."/>
            <person name="Wilming L.G."/>
            <person name="Aidinis V."/>
            <person name="Allen J.E."/>
            <person name="Ambesi-Impiombato A."/>
            <person name="Apweiler R."/>
            <person name="Aturaliya R.N."/>
            <person name="Bailey T.L."/>
            <person name="Bansal M."/>
            <person name="Baxter L."/>
            <person name="Beisel K.W."/>
            <person name="Bersano T."/>
            <person name="Bono H."/>
            <person name="Chalk A.M."/>
            <person name="Chiu K.P."/>
            <person name="Choudhary V."/>
            <person name="Christoffels A."/>
            <person name="Clutterbuck D.R."/>
            <person name="Crowe M.L."/>
            <person name="Dalla E."/>
            <person name="Dalrymple B.P."/>
            <person name="de Bono B."/>
            <person name="Della Gatta G."/>
            <person name="di Bernardo D."/>
            <person name="Down T."/>
            <person name="Engstrom P."/>
            <person name="Fagiolini M."/>
            <person name="Faulkner G."/>
            <person name="Fletcher C.F."/>
            <person name="Fukushima T."/>
            <person name="Furuno M."/>
            <person name="Futaki S."/>
            <person name="Gariboldi M."/>
            <person name="Georgii-Hemming P."/>
            <person name="Gingeras T.R."/>
            <person name="Gojobori T."/>
            <person name="Green R.E."/>
            <person name="Gustincich S."/>
            <person name="Harbers M."/>
            <person name="Hayashi Y."/>
            <person name="Hensch T.K."/>
            <person name="Hirokawa N."/>
            <person name="Hill D."/>
            <person name="Huminiecki L."/>
            <person name="Iacono M."/>
            <person name="Ikeo K."/>
            <person name="Iwama A."/>
            <person name="Ishikawa T."/>
            <person name="Jakt M."/>
            <person name="Kanapin A."/>
            <person name="Katoh M."/>
            <person name="Kawasawa Y."/>
            <person name="Kelso J."/>
            <person name="Kitamura H."/>
            <person name="Kitano H."/>
            <person name="Kollias G."/>
            <person name="Krishnan S.P."/>
            <person name="Kruger A."/>
            <person name="Kummerfeld S.K."/>
            <person name="Kurochkin I.V."/>
            <person name="Lareau L.F."/>
            <person name="Lazarevic D."/>
            <person name="Lipovich L."/>
            <person name="Liu J."/>
            <person name="Liuni S."/>
            <person name="McWilliam S."/>
            <person name="Madan Babu M."/>
            <person name="Madera M."/>
            <person name="Marchionni L."/>
            <person name="Matsuda H."/>
            <person name="Matsuzawa S."/>
            <person name="Miki H."/>
            <person name="Mignone F."/>
            <person name="Miyake S."/>
            <person name="Morris K."/>
            <person name="Mottagui-Tabar S."/>
            <person name="Mulder N."/>
            <person name="Nakano N."/>
            <person name="Nakauchi H."/>
            <person name="Ng P."/>
            <person name="Nilsson R."/>
            <person name="Nishiguchi S."/>
            <person name="Nishikawa S."/>
            <person name="Nori F."/>
            <person name="Ohara O."/>
            <person name="Okazaki Y."/>
            <person name="Orlando V."/>
            <person name="Pang K.C."/>
            <person name="Pavan W.J."/>
            <person name="Pavesi G."/>
            <person name="Pesole G."/>
            <person name="Petrovsky N."/>
            <person name="Piazza S."/>
            <person name="Reed J."/>
            <person name="Reid J.F."/>
            <person name="Ring B.Z."/>
            <person name="Ringwald M."/>
            <person name="Rost B."/>
            <person name="Ruan Y."/>
            <person name="Salzberg S.L."/>
            <person name="Sandelin A."/>
            <person name="Schneider C."/>
            <person name="Schoenbach C."/>
            <person name="Sekiguchi K."/>
            <person name="Semple C.A."/>
            <person name="Seno S."/>
            <person name="Sessa L."/>
            <person name="Sheng Y."/>
            <person name="Shibata Y."/>
            <person name="Shimada H."/>
            <person name="Shimada K."/>
            <person name="Silva D."/>
            <person name="Sinclair B."/>
            <person name="Sperling S."/>
            <person name="Stupka E."/>
            <person name="Sugiura K."/>
            <person name="Sultana R."/>
            <person name="Takenaka Y."/>
            <person name="Taki K."/>
            <person name="Tammoja K."/>
            <person name="Tan S.L."/>
            <person name="Tang S."/>
            <person name="Taylor M.S."/>
            <person name="Tegner J."/>
            <person name="Teichmann S.A."/>
            <person name="Ueda H.R."/>
            <person name="van Nimwegen E."/>
            <person name="Verardo R."/>
            <person name="Wei C.L."/>
            <person name="Yagi K."/>
            <person name="Yamanishi H."/>
            <person name="Zabarovsky E."/>
            <person name="Zhu S."/>
            <person name="Zimmer A."/>
            <person name="Hide W."/>
            <person name="Bult C."/>
            <person name="Grimmond S.M."/>
            <person name="Teasdale R.D."/>
            <person name="Liu E.T."/>
            <person name="Brusic V."/>
            <person name="Quackenbush J."/>
            <person name="Wahlestedt C."/>
            <person name="Mattick J.S."/>
            <person name="Hume D.A."/>
            <person name="Kai C."/>
            <person name="Sasaki D."/>
            <person name="Tomaru Y."/>
            <person name="Fukuda S."/>
            <person name="Kanamori-Katayama M."/>
            <person name="Suzuki M."/>
            <person name="Aoki J."/>
            <person name="Arakawa T."/>
            <person name="Iida J."/>
            <person name="Imamura K."/>
            <person name="Itoh M."/>
            <person name="Kato T."/>
            <person name="Kawaji H."/>
            <person name="Kawagashira N."/>
            <person name="Kawashima T."/>
            <person name="Kojima M."/>
            <person name="Kondo S."/>
            <person name="Konno H."/>
            <person name="Nakano K."/>
            <person name="Ninomiya N."/>
            <person name="Nishio T."/>
            <person name="Okada M."/>
            <person name="Plessy C."/>
            <person name="Shibata K."/>
            <person name="Shiraki T."/>
            <person name="Suzuki S."/>
            <person name="Tagami M."/>
            <person name="Waki K."/>
            <person name="Watahiki A."/>
            <person name="Okamura-Oho Y."/>
            <person name="Suzuki H."/>
            <person name="Kawai J."/>
            <person name="Hayashizaki Y."/>
        </authorList>
    </citation>
    <scope>NUCLEOTIDE SEQUENCE [LARGE SCALE MRNA]</scope>
    <source>
        <strain>C57BL/6J</strain>
        <tissue>Colon</tissue>
        <tissue>Stomach</tissue>
    </source>
</reference>
<reference key="4">
    <citation type="journal article" date="2004" name="Genome Res.">
        <title>The status, quality, and expansion of the NIH full-length cDNA project: the Mammalian Gene Collection (MGC).</title>
        <authorList>
            <consortium name="The MGC Project Team"/>
        </authorList>
    </citation>
    <scope>NUCLEOTIDE SEQUENCE [LARGE SCALE MRNA]</scope>
    <source>
        <strain>FVB/N</strain>
        <tissue>Colon</tissue>
    </source>
</reference>
<reference key="5">
    <citation type="journal article" date="2001" name="Proc. Natl. Acad. Sci. U.S.A.">
        <title>Role of gob-5 in mucus overproduction and airway hyperresponsiveness in asthma.</title>
        <authorList>
            <person name="Nakanishi A."/>
            <person name="Morita S."/>
            <person name="Iwashita H."/>
            <person name="Sagiya Y."/>
            <person name="Ashida Y."/>
            <person name="Shirafuji H."/>
            <person name="Fujisawa Y."/>
            <person name="Nishimura O."/>
            <person name="Fujino M."/>
        </authorList>
    </citation>
    <scope>FUNCTION</scope>
    <scope>TISSUE SPECIFICITY</scope>
</reference>
<reference key="6">
    <citation type="journal article" date="2002" name="J. Histochem. Cytochem.">
        <title>The murine mCLCA3 (alias gob-5) protein is located in the mucin granule membranes of intestinal, respiratory, and uterine goblet cells.</title>
        <authorList>
            <person name="Leverkoehne I."/>
            <person name="Gruber A.D."/>
        </authorList>
    </citation>
    <scope>SUBCELLULAR LOCATION</scope>
    <scope>TISSUE SPECIFICITY</scope>
    <scope>PROTEOLYTIC PROCESSING</scope>
    <scope>GLYCOSYLATION</scope>
</reference>
<reference key="7">
    <citation type="journal article" date="2005" name="Am. J. Pathol.">
        <title>Gene expression profiles reveal increased mClca3 (Gob5) expression and mucin production in a murine model of asbestos-induced fibrogenesis.</title>
        <authorList>
            <person name="Sabo-Attwood T."/>
            <person name="Ramos-Nino M."/>
            <person name="Bond J."/>
            <person name="Butnor K.J."/>
            <person name="Heintz N."/>
            <person name="Gruber A.D."/>
            <person name="Steele C."/>
            <person name="Taatjes D.J."/>
            <person name="Vacek P."/>
            <person name="Mossman B.T."/>
        </authorList>
    </citation>
    <scope>INDUCTION</scope>
</reference>
<reference key="8">
    <citation type="journal article" date="2005" name="J. Biol. Chem.">
        <title>hCLCA1 and mCLCA3 are secreted non-integral membrane proteins and therefore are not ion channels.</title>
        <authorList>
            <person name="Gibson A."/>
            <person name="Lewis A.P."/>
            <person name="Affleck K."/>
            <person name="Aitken A.J."/>
            <person name="Meldrum E."/>
            <person name="Thompson N."/>
        </authorList>
    </citation>
    <scope>SUBCELLULAR LOCATION</scope>
</reference>
<reference key="9">
    <citation type="journal article" date="2005" name="Mol. Cell. Proteomics">
        <title>Blue native/SDS-PAGE analysis reveals reduced expression of the mClCA3 protein in cystic fibrosis knock-out mice.</title>
        <authorList>
            <person name="Brouillard F."/>
            <person name="Bensalem N."/>
            <person name="Hinzpeter A."/>
            <person name="Tondelier D."/>
            <person name="Trudel S."/>
            <person name="Gruber A.D."/>
            <person name="Ollero M."/>
            <person name="Edelman A."/>
        </authorList>
    </citation>
    <scope>INDUCTION</scope>
</reference>
<reference key="10">
    <citation type="journal article" date="2006" name="Am. J. Respir. Cell Mol. Biol.">
        <title>Gob-5 contributes to goblet cell hyperplasia and modulates pulmonary tissue inflammation.</title>
        <authorList>
            <person name="Long A.J."/>
            <person name="Sypek J.P."/>
            <person name="Askew R."/>
            <person name="Fish S.C."/>
            <person name="Mason L.E."/>
            <person name="Williams C.M.M."/>
            <person name="Goldman S.J."/>
        </authorList>
    </citation>
    <scope>FUNCTION</scope>
    <scope>DISRUPTION PHENOTYPE</scope>
</reference>
<reference key="11">
    <citation type="journal article" date="2006" name="J. Biol. Chem.">
        <title>Both cleavage products of the mCLCA3 protein are secreted soluble proteins.</title>
        <authorList>
            <person name="Mundhenk L."/>
            <person name="Alfalah M."/>
            <person name="Elble R.C."/>
            <person name="Pauli B.U."/>
            <person name="Naim H.Y."/>
            <person name="Gruber A.D."/>
        </authorList>
    </citation>
    <scope>SUBCELLULAR LOCATION</scope>
    <scope>GLYCOSYLATION</scope>
    <scope>PROCESSING</scope>
</reference>